<comment type="function">
    <text evidence="1">Essential component of the cytosolic iron-sulfur (Fe/S) protein assembly machinery. Required for the maturation of extramitochondrial Fe/S proteins.</text>
</comment>
<comment type="similarity">
    <text evidence="1">Belongs to the WD repeat CIA1 family.</text>
</comment>
<reference key="1">
    <citation type="journal article" date="2006" name="PLoS Pathog.">
        <title>New perspectives on host-parasite interplay by comparative transcriptomic and proteomic analyses of Schistosoma japonicum.</title>
        <authorList>
            <person name="Liu F."/>
            <person name="Lu J."/>
            <person name="Hu W."/>
            <person name="Wang S.-Y."/>
            <person name="Cui S.-J."/>
            <person name="Chi M."/>
            <person name="Yan Q."/>
            <person name="Wang X.-R."/>
            <person name="Song H.-D."/>
            <person name="Xu X.-N."/>
            <person name="Wang J.-J."/>
            <person name="Zhang X.-L."/>
            <person name="Zhang X."/>
            <person name="Wang Z.-Q."/>
            <person name="Xue C.-L."/>
            <person name="Brindley P.J."/>
            <person name="McManus D.P."/>
            <person name="Yang P.-Y."/>
            <person name="Feng Z."/>
            <person name="Chen Z."/>
            <person name="Han Z.-G."/>
        </authorList>
    </citation>
    <scope>NUCLEOTIDE SEQUENCE [LARGE SCALE MRNA]</scope>
</reference>
<dbReference type="EMBL" id="AY813584">
    <property type="protein sequence ID" value="AAW25316.1"/>
    <property type="molecule type" value="mRNA"/>
</dbReference>
<dbReference type="SMR" id="Q5DFU0"/>
<dbReference type="GO" id="GO:0097361">
    <property type="term" value="C:cytosolic [4Fe-4S] assembly targeting complex"/>
    <property type="evidence" value="ECO:0007669"/>
    <property type="project" value="InterPro"/>
</dbReference>
<dbReference type="GO" id="GO:0016226">
    <property type="term" value="P:iron-sulfur cluster assembly"/>
    <property type="evidence" value="ECO:0007669"/>
    <property type="project" value="UniProtKB-UniRule"/>
</dbReference>
<dbReference type="GO" id="GO:0051604">
    <property type="term" value="P:protein maturation"/>
    <property type="evidence" value="ECO:0000250"/>
    <property type="project" value="UniProtKB"/>
</dbReference>
<dbReference type="CDD" id="cd00200">
    <property type="entry name" value="WD40"/>
    <property type="match status" value="1"/>
</dbReference>
<dbReference type="FunFam" id="2.130.10.10:FF:000136">
    <property type="entry name" value="Probable cytosolic iron-sulfur protein assembly protein CIAO1"/>
    <property type="match status" value="1"/>
</dbReference>
<dbReference type="Gene3D" id="2.130.10.10">
    <property type="entry name" value="YVTN repeat-like/Quinoprotein amine dehydrogenase"/>
    <property type="match status" value="1"/>
</dbReference>
<dbReference type="HAMAP" id="MF_03037">
    <property type="entry name" value="ciao1"/>
    <property type="match status" value="1"/>
</dbReference>
<dbReference type="InterPro" id="IPR028608">
    <property type="entry name" value="CIAO1/Cia1"/>
</dbReference>
<dbReference type="InterPro" id="IPR020472">
    <property type="entry name" value="G-protein_beta_WD-40_rep"/>
</dbReference>
<dbReference type="InterPro" id="IPR015943">
    <property type="entry name" value="WD40/YVTN_repeat-like_dom_sf"/>
</dbReference>
<dbReference type="InterPro" id="IPR019775">
    <property type="entry name" value="WD40_repeat_CS"/>
</dbReference>
<dbReference type="InterPro" id="IPR036322">
    <property type="entry name" value="WD40_repeat_dom_sf"/>
</dbReference>
<dbReference type="InterPro" id="IPR001680">
    <property type="entry name" value="WD40_rpt"/>
</dbReference>
<dbReference type="PANTHER" id="PTHR19920:SF0">
    <property type="entry name" value="CYTOSOLIC IRON-SULFUR PROTEIN ASSEMBLY PROTEIN CIAO1-RELATED"/>
    <property type="match status" value="1"/>
</dbReference>
<dbReference type="PANTHER" id="PTHR19920">
    <property type="entry name" value="WD40 PROTEIN CIAO1"/>
    <property type="match status" value="1"/>
</dbReference>
<dbReference type="Pfam" id="PF00400">
    <property type="entry name" value="WD40"/>
    <property type="match status" value="7"/>
</dbReference>
<dbReference type="PRINTS" id="PR00320">
    <property type="entry name" value="GPROTEINBRPT"/>
</dbReference>
<dbReference type="SMART" id="SM00320">
    <property type="entry name" value="WD40"/>
    <property type="match status" value="7"/>
</dbReference>
<dbReference type="SUPFAM" id="SSF50978">
    <property type="entry name" value="WD40 repeat-like"/>
    <property type="match status" value="1"/>
</dbReference>
<dbReference type="PROSITE" id="PS00678">
    <property type="entry name" value="WD_REPEATS_1"/>
    <property type="match status" value="1"/>
</dbReference>
<dbReference type="PROSITE" id="PS50082">
    <property type="entry name" value="WD_REPEATS_2"/>
    <property type="match status" value="6"/>
</dbReference>
<dbReference type="PROSITE" id="PS50294">
    <property type="entry name" value="WD_REPEATS_REGION"/>
    <property type="match status" value="1"/>
</dbReference>
<organism>
    <name type="scientific">Schistosoma japonicum</name>
    <name type="common">Blood fluke</name>
    <dbReference type="NCBI Taxonomy" id="6182"/>
    <lineage>
        <taxon>Eukaryota</taxon>
        <taxon>Metazoa</taxon>
        <taxon>Spiralia</taxon>
        <taxon>Lophotrochozoa</taxon>
        <taxon>Platyhelminthes</taxon>
        <taxon>Trematoda</taxon>
        <taxon>Digenea</taxon>
        <taxon>Strigeidida</taxon>
        <taxon>Schistosomatoidea</taxon>
        <taxon>Schistosomatidae</taxon>
        <taxon>Schistosoma</taxon>
    </lineage>
</organism>
<sequence length="352" mass="39404">MLNVREVQKLKASNKRLWSLSWNHKGSVLISSGEDRVIKLWAKCNDQLWGSSFSLPEAHKKSIRCVTWSPCGTYIASASFDGTVTIWKISEAHSAPEMEALVSLEGHTSEVKCVAWCPSGHLIATCGRDKSVWLWEFDDEEDVQCVSVLQPHSQDVKSVAWHPHGEVLVSTSYDNKINVYREELDDWTVFAQLSGHDSTVWKAEFSPSGDILASCSDDLCVKLWSWEGVCGKSSSWMCIATLSGYHTRTIFDLNWSPDSQLLASCGSDNRLCIYKMPANGLTHIGGKPCFEEPPVLWGHVPNAHSEDVNCVRWKPGNITDISHSESISNCHLFLTTASDDGYIKFWSIEYEL</sequence>
<name>CIAO1_SCHJA</name>
<keyword id="KW-0677">Repeat</keyword>
<keyword id="KW-0853">WD repeat</keyword>
<protein>
    <recommendedName>
        <fullName evidence="1">Probable cytosolic iron-sulfur protein assembly protein CIAO1 homolog</fullName>
    </recommendedName>
</protein>
<proteinExistence type="evidence at transcript level"/>
<evidence type="ECO:0000255" key="1">
    <source>
        <dbReference type="HAMAP-Rule" id="MF_03037"/>
    </source>
</evidence>
<feature type="chain" id="PRO_0000382497" description="Probable cytosolic iron-sulfur protein assembly protein CIAO1 homolog">
    <location>
        <begin position="1"/>
        <end position="352"/>
    </location>
</feature>
<feature type="repeat" description="WD 1">
    <location>
        <begin position="12"/>
        <end position="51"/>
    </location>
</feature>
<feature type="repeat" description="WD 2">
    <location>
        <begin position="58"/>
        <end position="97"/>
    </location>
</feature>
<feature type="repeat" description="WD 3">
    <location>
        <begin position="106"/>
        <end position="145"/>
    </location>
</feature>
<feature type="repeat" description="WD 4">
    <location>
        <begin position="151"/>
        <end position="190"/>
    </location>
</feature>
<feature type="repeat" description="WD 5">
    <location>
        <begin position="195"/>
        <end position="234"/>
    </location>
</feature>
<feature type="repeat" description="WD 6">
    <location>
        <begin position="245"/>
        <end position="284"/>
    </location>
</feature>
<feature type="repeat" description="WD 7">
    <location>
        <begin position="303"/>
        <end position="352"/>
    </location>
</feature>
<accession>Q5DFU0</accession>